<organism>
    <name type="scientific">Ureaplasma parvum serovar 3 (strain ATCC 27815 / 27 / NCTC 11736)</name>
    <dbReference type="NCBI Taxonomy" id="505682"/>
    <lineage>
        <taxon>Bacteria</taxon>
        <taxon>Bacillati</taxon>
        <taxon>Mycoplasmatota</taxon>
        <taxon>Mycoplasmoidales</taxon>
        <taxon>Mycoplasmoidaceae</taxon>
        <taxon>Ureaplasma</taxon>
    </lineage>
</organism>
<name>RS11_UREP2</name>
<gene>
    <name evidence="1" type="primary">rpsK</name>
    <name type="ordered locus">UPA3_0264</name>
</gene>
<protein>
    <recommendedName>
        <fullName evidence="1">Small ribosomal subunit protein uS11</fullName>
    </recommendedName>
    <alternativeName>
        <fullName evidence="2">30S ribosomal protein S11</fullName>
    </alternativeName>
</protein>
<reference key="1">
    <citation type="submission" date="2008-02" db="EMBL/GenBank/DDBJ databases">
        <title>Genome sequence of Ureaplasma parvum serovar 3.</title>
        <authorList>
            <person name="Methe B.A."/>
            <person name="Glass J."/>
            <person name="Waites K."/>
            <person name="Shrivastava S."/>
        </authorList>
    </citation>
    <scope>NUCLEOTIDE SEQUENCE [LARGE SCALE GENOMIC DNA]</scope>
    <source>
        <strain>ATCC 27815 / 27 / NCTC 11736</strain>
    </source>
</reference>
<proteinExistence type="inferred from homology"/>
<accession>B1AIP5</accession>
<sequence length="121" mass="12703">MAKKKKLSFTNGIAYIHATKNNTIITLADEQGSVLSWASSGSIGYKGTKKKTPYSAGIAAEAAAKAVIDMGLKSVEVHVNGTGASRDTAIRSLQAAGLEVTKIKDVTPIPHNGCRPPKKPR</sequence>
<comment type="function">
    <text evidence="1">Located on the platform of the 30S subunit, it bridges several disparate RNA helices of the 16S rRNA. Forms part of the Shine-Dalgarno cleft in the 70S ribosome.</text>
</comment>
<comment type="subunit">
    <text evidence="1">Part of the 30S ribosomal subunit. Interacts with proteins S7 and S18. Binds to IF-3.</text>
</comment>
<comment type="similarity">
    <text evidence="1">Belongs to the universal ribosomal protein uS11 family.</text>
</comment>
<dbReference type="EMBL" id="CP000942">
    <property type="protein sequence ID" value="ACA32725.1"/>
    <property type="molecule type" value="Genomic_DNA"/>
</dbReference>
<dbReference type="RefSeq" id="WP_004026006.1">
    <property type="nucleotide sequence ID" value="NC_010503.1"/>
</dbReference>
<dbReference type="SMR" id="B1AIP5"/>
<dbReference type="GeneID" id="93848731"/>
<dbReference type="KEGG" id="upa:UPA3_0264"/>
<dbReference type="HOGENOM" id="CLU_072439_5_0_14"/>
<dbReference type="Proteomes" id="UP000002162">
    <property type="component" value="Chromosome"/>
</dbReference>
<dbReference type="GO" id="GO:1990904">
    <property type="term" value="C:ribonucleoprotein complex"/>
    <property type="evidence" value="ECO:0007669"/>
    <property type="project" value="UniProtKB-KW"/>
</dbReference>
<dbReference type="GO" id="GO:0005840">
    <property type="term" value="C:ribosome"/>
    <property type="evidence" value="ECO:0007669"/>
    <property type="project" value="UniProtKB-KW"/>
</dbReference>
<dbReference type="GO" id="GO:0019843">
    <property type="term" value="F:rRNA binding"/>
    <property type="evidence" value="ECO:0007669"/>
    <property type="project" value="UniProtKB-UniRule"/>
</dbReference>
<dbReference type="GO" id="GO:0003735">
    <property type="term" value="F:structural constituent of ribosome"/>
    <property type="evidence" value="ECO:0007669"/>
    <property type="project" value="InterPro"/>
</dbReference>
<dbReference type="GO" id="GO:0006412">
    <property type="term" value="P:translation"/>
    <property type="evidence" value="ECO:0007669"/>
    <property type="project" value="UniProtKB-UniRule"/>
</dbReference>
<dbReference type="FunFam" id="3.30.420.80:FF:000010">
    <property type="entry name" value="30S ribosomal protein S11"/>
    <property type="match status" value="1"/>
</dbReference>
<dbReference type="Gene3D" id="3.30.420.80">
    <property type="entry name" value="Ribosomal protein S11"/>
    <property type="match status" value="1"/>
</dbReference>
<dbReference type="HAMAP" id="MF_01310">
    <property type="entry name" value="Ribosomal_uS11"/>
    <property type="match status" value="1"/>
</dbReference>
<dbReference type="InterPro" id="IPR001971">
    <property type="entry name" value="Ribosomal_uS11"/>
</dbReference>
<dbReference type="InterPro" id="IPR019981">
    <property type="entry name" value="Ribosomal_uS11_bac-type"/>
</dbReference>
<dbReference type="InterPro" id="IPR018102">
    <property type="entry name" value="Ribosomal_uS11_CS"/>
</dbReference>
<dbReference type="InterPro" id="IPR036967">
    <property type="entry name" value="Ribosomal_uS11_sf"/>
</dbReference>
<dbReference type="NCBIfam" id="NF003698">
    <property type="entry name" value="PRK05309.1"/>
    <property type="match status" value="1"/>
</dbReference>
<dbReference type="NCBIfam" id="TIGR03632">
    <property type="entry name" value="uS11_bact"/>
    <property type="match status" value="1"/>
</dbReference>
<dbReference type="PANTHER" id="PTHR11759">
    <property type="entry name" value="40S RIBOSOMAL PROTEIN S14/30S RIBOSOMAL PROTEIN S11"/>
    <property type="match status" value="1"/>
</dbReference>
<dbReference type="Pfam" id="PF00411">
    <property type="entry name" value="Ribosomal_S11"/>
    <property type="match status" value="1"/>
</dbReference>
<dbReference type="PIRSF" id="PIRSF002131">
    <property type="entry name" value="Ribosomal_S11"/>
    <property type="match status" value="1"/>
</dbReference>
<dbReference type="SUPFAM" id="SSF53137">
    <property type="entry name" value="Translational machinery components"/>
    <property type="match status" value="1"/>
</dbReference>
<dbReference type="PROSITE" id="PS00054">
    <property type="entry name" value="RIBOSOMAL_S11"/>
    <property type="match status" value="1"/>
</dbReference>
<evidence type="ECO:0000255" key="1">
    <source>
        <dbReference type="HAMAP-Rule" id="MF_01310"/>
    </source>
</evidence>
<evidence type="ECO:0000305" key="2"/>
<keyword id="KW-0687">Ribonucleoprotein</keyword>
<keyword id="KW-0689">Ribosomal protein</keyword>
<keyword id="KW-0694">RNA-binding</keyword>
<keyword id="KW-0699">rRNA-binding</keyword>
<feature type="chain" id="PRO_1000086217" description="Small ribosomal subunit protein uS11">
    <location>
        <begin position="1"/>
        <end position="121"/>
    </location>
</feature>